<dbReference type="EMBL" id="AY481571">
    <property type="protein sequence ID" value="AAS49898.1"/>
    <property type="molecule type" value="mRNA"/>
</dbReference>
<dbReference type="EMBL" id="AY481572">
    <property type="protein sequence ID" value="AAS49899.1"/>
    <property type="molecule type" value="mRNA"/>
</dbReference>
<dbReference type="EMBL" id="AB002331">
    <property type="protein sequence ID" value="BAA20791.2"/>
    <property type="status" value="ALT_INIT"/>
    <property type="molecule type" value="mRNA"/>
</dbReference>
<dbReference type="EMBL" id="AK002127">
    <property type="protein sequence ID" value="BAA92094.1"/>
    <property type="molecule type" value="mRNA"/>
</dbReference>
<dbReference type="EMBL" id="AL117379">
    <property type="status" value="NOT_ANNOTATED_CDS"/>
    <property type="molecule type" value="Genomic_DNA"/>
</dbReference>
<dbReference type="EMBL" id="AL035669">
    <property type="status" value="NOT_ANNOTATED_CDS"/>
    <property type="molecule type" value="Genomic_DNA"/>
</dbReference>
<dbReference type="EMBL" id="CH471077">
    <property type="protein sequence ID" value="EAW75322.1"/>
    <property type="molecule type" value="Genomic_DNA"/>
</dbReference>
<dbReference type="EMBL" id="CH471077">
    <property type="protein sequence ID" value="EAW75323.1"/>
    <property type="molecule type" value="Genomic_DNA"/>
</dbReference>
<dbReference type="EMBL" id="BC000770">
    <property type="protein sequence ID" value="AAH00770.1"/>
    <property type="molecule type" value="mRNA"/>
</dbReference>
<dbReference type="EMBL" id="BC004237">
    <property type="protein sequence ID" value="AAH04237.1"/>
    <property type="molecule type" value="mRNA"/>
</dbReference>
<dbReference type="EMBL" id="BC012757">
    <property type="status" value="NOT_ANNOTATED_CDS"/>
    <property type="molecule type" value="mRNA"/>
</dbReference>
<dbReference type="EMBL" id="BC014489">
    <property type="protein sequence ID" value="AAH14489.1"/>
    <property type="molecule type" value="mRNA"/>
</dbReference>
<dbReference type="EMBL" id="BC137177">
    <property type="protein sequence ID" value="AAI37178.1"/>
    <property type="molecule type" value="mRNA"/>
</dbReference>
<dbReference type="EMBL" id="AL133063">
    <property type="protein sequence ID" value="CAB61387.1"/>
    <property type="molecule type" value="mRNA"/>
</dbReference>
<dbReference type="CCDS" id="CCDS13508.2">
    <molecule id="Q9BTC0-1"/>
</dbReference>
<dbReference type="CCDS" id="CCDS13509.1">
    <molecule id="Q9BTC0-3"/>
</dbReference>
<dbReference type="CCDS" id="CCDS33506.1">
    <molecule id="Q9BTC0-4"/>
</dbReference>
<dbReference type="RefSeq" id="NP_001180298.1">
    <molecule id="Q9BTC0-4"/>
    <property type="nucleotide sequence ID" value="NM_001193369.2"/>
</dbReference>
<dbReference type="RefSeq" id="NP_001180299.1">
    <molecule id="Q9BTC0-1"/>
    <property type="nucleotide sequence ID" value="NM_001193370.2"/>
</dbReference>
<dbReference type="RefSeq" id="NP_071388.2">
    <molecule id="Q9BTC0-3"/>
    <property type="nucleotide sequence ID" value="NM_022105.4"/>
</dbReference>
<dbReference type="RefSeq" id="NP_149072.2">
    <molecule id="Q9BTC0-4"/>
    <property type="nucleotide sequence ID" value="NM_033081.3"/>
</dbReference>
<dbReference type="RefSeq" id="NP_542986.1">
    <molecule id="Q9BTC0-3"/>
    <property type="nucleotide sequence ID" value="NM_080796.4"/>
</dbReference>
<dbReference type="RefSeq" id="NP_542987.2">
    <molecule id="Q9BTC0-1"/>
    <property type="nucleotide sequence ID" value="NM_080797.4"/>
</dbReference>
<dbReference type="RefSeq" id="XP_011526811.1">
    <property type="nucleotide sequence ID" value="XM_011528509.2"/>
</dbReference>
<dbReference type="PDB" id="2M3H">
    <property type="method" value="NMR"/>
    <property type="chains" value="A=265-322"/>
</dbReference>
<dbReference type="PDB" id="4L7X">
    <property type="method" value="X-ray"/>
    <property type="resolution" value="1.35 A"/>
    <property type="chains" value="A=266-325"/>
</dbReference>
<dbReference type="PDBsum" id="2M3H"/>
<dbReference type="PDBsum" id="4L7X"/>
<dbReference type="BMRB" id="Q9BTC0"/>
<dbReference type="SMR" id="Q9BTC0"/>
<dbReference type="BioGRID" id="116266">
    <property type="interactions" value="191"/>
</dbReference>
<dbReference type="FunCoup" id="Q9BTC0">
    <property type="interactions" value="2981"/>
</dbReference>
<dbReference type="IntAct" id="Q9BTC0">
    <property type="interactions" value="115"/>
</dbReference>
<dbReference type="MINT" id="Q9BTC0"/>
<dbReference type="STRING" id="9606.ENSP00000266070"/>
<dbReference type="CarbonylDB" id="Q9BTC0"/>
<dbReference type="GlyCosmos" id="Q9BTC0">
    <property type="glycosylation" value="12 sites, 2 glycans"/>
</dbReference>
<dbReference type="GlyGen" id="Q9BTC0">
    <property type="glycosylation" value="34 sites, 2 O-linked glycans (31 sites)"/>
</dbReference>
<dbReference type="iPTMnet" id="Q9BTC0"/>
<dbReference type="MetOSite" id="Q9BTC0"/>
<dbReference type="PhosphoSitePlus" id="Q9BTC0"/>
<dbReference type="SwissPalm" id="Q9BTC0"/>
<dbReference type="BioMuta" id="DIDO1"/>
<dbReference type="DMDM" id="116241332"/>
<dbReference type="jPOST" id="Q9BTC0"/>
<dbReference type="MassIVE" id="Q9BTC0"/>
<dbReference type="PaxDb" id="9606-ENSP00000266070"/>
<dbReference type="PeptideAtlas" id="Q9BTC0"/>
<dbReference type="ProteomicsDB" id="78967">
    <molecule id="Q9BTC0-4"/>
</dbReference>
<dbReference type="ProteomicsDB" id="78968">
    <molecule id="Q9BTC0-1"/>
</dbReference>
<dbReference type="ProteomicsDB" id="78969">
    <molecule id="Q9BTC0-2"/>
</dbReference>
<dbReference type="ProteomicsDB" id="78970">
    <molecule id="Q9BTC0-3"/>
</dbReference>
<dbReference type="Pumba" id="Q9BTC0"/>
<dbReference type="Antibodypedia" id="3820">
    <property type="antibodies" value="267 antibodies from 37 providers"/>
</dbReference>
<dbReference type="DNASU" id="11083"/>
<dbReference type="Ensembl" id="ENST00000266070.8">
    <molecule id="Q9BTC0-4"/>
    <property type="protein sequence ID" value="ENSP00000266070.4"/>
    <property type="gene ID" value="ENSG00000101191.17"/>
</dbReference>
<dbReference type="Ensembl" id="ENST00000354665.8">
    <molecule id="Q9BTC0-3"/>
    <property type="protein sequence ID" value="ENSP00000346692.4"/>
    <property type="gene ID" value="ENSG00000101191.17"/>
</dbReference>
<dbReference type="Ensembl" id="ENST00000370366.1">
    <molecule id="Q9BTC0-2"/>
    <property type="protein sequence ID" value="ENSP00000359391.1"/>
    <property type="gene ID" value="ENSG00000101191.17"/>
</dbReference>
<dbReference type="Ensembl" id="ENST00000370368.5">
    <molecule id="Q9BTC0-3"/>
    <property type="protein sequence ID" value="ENSP00000359394.1"/>
    <property type="gene ID" value="ENSG00000101191.17"/>
</dbReference>
<dbReference type="Ensembl" id="ENST00000370371.8">
    <molecule id="Q9BTC0-3"/>
    <property type="protein sequence ID" value="ENSP00000359397.4"/>
    <property type="gene ID" value="ENSG00000101191.17"/>
</dbReference>
<dbReference type="Ensembl" id="ENST00000395340.5">
    <molecule id="Q9BTC0-1"/>
    <property type="protein sequence ID" value="ENSP00000378749.1"/>
    <property type="gene ID" value="ENSG00000101191.17"/>
</dbReference>
<dbReference type="Ensembl" id="ENST00000395343.6">
    <molecule id="Q9BTC0-4"/>
    <property type="protein sequence ID" value="ENSP00000378752.1"/>
    <property type="gene ID" value="ENSG00000101191.17"/>
</dbReference>
<dbReference type="GeneID" id="11083"/>
<dbReference type="KEGG" id="hsa:11083"/>
<dbReference type="MANE-Select" id="ENST00000395343.6">
    <property type="protein sequence ID" value="ENSP00000378752.1"/>
    <property type="RefSeq nucleotide sequence ID" value="NM_001193369.2"/>
    <property type="RefSeq protein sequence ID" value="NP_001180298.1"/>
</dbReference>
<dbReference type="UCSC" id="uc002ydr.3">
    <molecule id="Q9BTC0-4"/>
    <property type="organism name" value="human"/>
</dbReference>
<dbReference type="AGR" id="HGNC:2680"/>
<dbReference type="CTD" id="11083"/>
<dbReference type="DisGeNET" id="11083"/>
<dbReference type="GeneCards" id="DIDO1"/>
<dbReference type="HGNC" id="HGNC:2680">
    <property type="gene designation" value="DIDO1"/>
</dbReference>
<dbReference type="HPA" id="ENSG00000101191">
    <property type="expression patterns" value="Low tissue specificity"/>
</dbReference>
<dbReference type="MIM" id="604140">
    <property type="type" value="gene"/>
</dbReference>
<dbReference type="neXtProt" id="NX_Q9BTC0"/>
<dbReference type="OpenTargets" id="ENSG00000101191"/>
<dbReference type="PharmGKB" id="PA27147"/>
<dbReference type="VEuPathDB" id="HostDB:ENSG00000101191"/>
<dbReference type="eggNOG" id="KOG1632">
    <property type="taxonomic scope" value="Eukaryota"/>
</dbReference>
<dbReference type="eggNOG" id="KOG1634">
    <property type="taxonomic scope" value="Eukaryota"/>
</dbReference>
<dbReference type="GeneTree" id="ENSGT00940000155532"/>
<dbReference type="HOGENOM" id="CLU_000673_1_0_1"/>
<dbReference type="InParanoid" id="Q9BTC0"/>
<dbReference type="OMA" id="HPNQFDG"/>
<dbReference type="OrthoDB" id="1884872at2759"/>
<dbReference type="PAN-GO" id="Q9BTC0">
    <property type="GO annotations" value="2 GO annotations based on evolutionary models"/>
</dbReference>
<dbReference type="PhylomeDB" id="Q9BTC0"/>
<dbReference type="TreeFam" id="TF350578"/>
<dbReference type="PathwayCommons" id="Q9BTC0"/>
<dbReference type="Reactome" id="R-HSA-1221632">
    <molecule id="Q9BTC0-1"/>
    <property type="pathway name" value="Meiotic synapsis"/>
</dbReference>
<dbReference type="SignaLink" id="Q9BTC0"/>
<dbReference type="SIGNOR" id="Q9BTC0"/>
<dbReference type="BioGRID-ORCS" id="11083">
    <property type="hits" value="285 hits in 1165 CRISPR screens"/>
</dbReference>
<dbReference type="ChiTaRS" id="DIDO1">
    <property type="organism name" value="human"/>
</dbReference>
<dbReference type="EvolutionaryTrace" id="Q9BTC0"/>
<dbReference type="GeneWiki" id="DIDO1"/>
<dbReference type="GenomeRNAi" id="11083"/>
<dbReference type="Pharos" id="Q9BTC0">
    <property type="development level" value="Tbio"/>
</dbReference>
<dbReference type="PRO" id="PR:Q9BTC0"/>
<dbReference type="Proteomes" id="UP000005640">
    <property type="component" value="Chromosome 20"/>
</dbReference>
<dbReference type="RNAct" id="Q9BTC0">
    <property type="molecule type" value="protein"/>
</dbReference>
<dbReference type="Bgee" id="ENSG00000101191">
    <property type="expression patterns" value="Expressed in buccal mucosa cell and 197 other cell types or tissues"/>
</dbReference>
<dbReference type="GO" id="GO:0005737">
    <property type="term" value="C:cytoplasm"/>
    <property type="evidence" value="ECO:0007669"/>
    <property type="project" value="UniProtKB-SubCell"/>
</dbReference>
<dbReference type="GO" id="GO:0005634">
    <property type="term" value="C:nucleus"/>
    <property type="evidence" value="ECO:0000318"/>
    <property type="project" value="GO_Central"/>
</dbReference>
<dbReference type="GO" id="GO:0005819">
    <property type="term" value="C:spindle"/>
    <property type="evidence" value="ECO:0007669"/>
    <property type="project" value="UniProtKB-SubCell"/>
</dbReference>
<dbReference type="GO" id="GO:0003723">
    <property type="term" value="F:RNA binding"/>
    <property type="evidence" value="ECO:0007005"/>
    <property type="project" value="UniProtKB"/>
</dbReference>
<dbReference type="GO" id="GO:0008270">
    <property type="term" value="F:zinc ion binding"/>
    <property type="evidence" value="ECO:0007669"/>
    <property type="project" value="UniProtKB-KW"/>
</dbReference>
<dbReference type="GO" id="GO:0097190">
    <property type="term" value="P:apoptotic signaling pathway"/>
    <property type="evidence" value="ECO:0007669"/>
    <property type="project" value="Ensembl"/>
</dbReference>
<dbReference type="GO" id="GO:0006351">
    <property type="term" value="P:DNA-templated transcription"/>
    <property type="evidence" value="ECO:0007669"/>
    <property type="project" value="InterPro"/>
</dbReference>
<dbReference type="GO" id="GO:0006357">
    <property type="term" value="P:regulation of transcription by RNA polymerase II"/>
    <property type="evidence" value="ECO:0000318"/>
    <property type="project" value="GO_Central"/>
</dbReference>
<dbReference type="CDD" id="cd15639">
    <property type="entry name" value="PHD_DIDO1_like"/>
    <property type="match status" value="1"/>
</dbReference>
<dbReference type="CDD" id="cd21547">
    <property type="entry name" value="SPOC_DIDO1-like"/>
    <property type="match status" value="1"/>
</dbReference>
<dbReference type="FunFam" id="1.10.472.30:FF:000002">
    <property type="entry name" value="Death-inducer obliterator 1"/>
    <property type="match status" value="1"/>
</dbReference>
<dbReference type="FunFam" id="3.30.40.10:FF:000225">
    <property type="entry name" value="Death-inducer obliterator 1"/>
    <property type="match status" value="1"/>
</dbReference>
<dbReference type="Gene3D" id="1.10.472.30">
    <property type="entry name" value="Transcription elongation factor S-II, central domain"/>
    <property type="match status" value="1"/>
</dbReference>
<dbReference type="Gene3D" id="3.30.40.10">
    <property type="entry name" value="Zinc/RING finger domain, C3HC4 (zinc finger)"/>
    <property type="match status" value="1"/>
</dbReference>
<dbReference type="InterPro" id="IPR033082">
    <property type="entry name" value="DIDO1_PHD"/>
</dbReference>
<dbReference type="InterPro" id="IPR012921">
    <property type="entry name" value="SPOC_C"/>
</dbReference>
<dbReference type="InterPro" id="IPR003618">
    <property type="entry name" value="TFIIS_cen_dom"/>
</dbReference>
<dbReference type="InterPro" id="IPR036575">
    <property type="entry name" value="TFIIS_cen_dom_sf"/>
</dbReference>
<dbReference type="InterPro" id="IPR019786">
    <property type="entry name" value="Zinc_finger_PHD-type_CS"/>
</dbReference>
<dbReference type="InterPro" id="IPR011011">
    <property type="entry name" value="Znf_FYVE_PHD"/>
</dbReference>
<dbReference type="InterPro" id="IPR001965">
    <property type="entry name" value="Znf_PHD"/>
</dbReference>
<dbReference type="InterPro" id="IPR019787">
    <property type="entry name" value="Znf_PHD-finger"/>
</dbReference>
<dbReference type="InterPro" id="IPR013083">
    <property type="entry name" value="Znf_RING/FYVE/PHD"/>
</dbReference>
<dbReference type="PANTHER" id="PTHR11477:SF13">
    <property type="entry name" value="DEATH-INDUCER OBLITERATOR 1"/>
    <property type="match status" value="1"/>
</dbReference>
<dbReference type="PANTHER" id="PTHR11477">
    <property type="entry name" value="TRANSCRIPTION FACTOR S-II ZINC FINGER DOMAIN-CONTAINING PROTEIN"/>
    <property type="match status" value="1"/>
</dbReference>
<dbReference type="Pfam" id="PF00628">
    <property type="entry name" value="PHD"/>
    <property type="match status" value="1"/>
</dbReference>
<dbReference type="Pfam" id="PF07744">
    <property type="entry name" value="SPOC"/>
    <property type="match status" value="1"/>
</dbReference>
<dbReference type="Pfam" id="PF07500">
    <property type="entry name" value="TFIIS_M"/>
    <property type="match status" value="1"/>
</dbReference>
<dbReference type="SMART" id="SM00249">
    <property type="entry name" value="PHD"/>
    <property type="match status" value="1"/>
</dbReference>
<dbReference type="SMART" id="SM00510">
    <property type="entry name" value="TFS2M"/>
    <property type="match status" value="1"/>
</dbReference>
<dbReference type="SUPFAM" id="SSF46942">
    <property type="entry name" value="Elongation factor TFIIS domain 2"/>
    <property type="match status" value="1"/>
</dbReference>
<dbReference type="SUPFAM" id="SSF57903">
    <property type="entry name" value="FYVE/PHD zinc finger"/>
    <property type="match status" value="1"/>
</dbReference>
<dbReference type="PROSITE" id="PS51321">
    <property type="entry name" value="TFIIS_CENTRAL"/>
    <property type="match status" value="1"/>
</dbReference>
<dbReference type="PROSITE" id="PS01359">
    <property type="entry name" value="ZF_PHD_1"/>
    <property type="match status" value="1"/>
</dbReference>
<dbReference type="PROSITE" id="PS50016">
    <property type="entry name" value="ZF_PHD_2"/>
    <property type="match status" value="1"/>
</dbReference>
<sequence>MDDKGDPSNEEAPKAIKPTSKEFRKTWGFRRTTIAKREGAGDAEADPLEPPPPQQQLGLSLRRSGRQPKRTERVEQFLTIARRRGRRSMPVSLEDSGEPTSCPATDAETASEGSVESASETRSGPQSASTAVKERPASSEKVKGGDDHDDTSDSDSDGLTLKELQNRLRRKREQEPTERPLKGIQSRLRKKRREEGPAETVGSEASDTVEGVLPSKQEPENDQGVVSQAGKDDRESKLEGKAAQDIKDEEPGDLGRPKPECEGYDPNALYCICRQPHNNRFMICCDRCEEWFHGDCVGISEARGRLLERNGEDYICPNCTILQVQDETHSETADQQEAKWRPGDADGTDCTSIGTIEQKSSEDQGIKGRIEKAANPSGKKKLKIFQPVIEAPGASKCIGPGCCHVAQPDSVYCSNDCILKHAAATMKFLSSGKEQKPKPKEKMKMKPEKPSLPKCGAQAGIKISSVHKRPAPEKKETTVKKAVVVPARSEALGKEAACESSTPSWASDHNYNAVKPEKTAAPSPSLLYKSTKEDRRSEEKAAAMAASKKTAPPGSAVGKQPAPRNLVPKKSSFANVAAATPAIKKPPSGFKGTIPKRPWLSATPSSGASAARQAGPAPAAATAASKKFPGSAALVGAVRKPVVPSVPMASPAPGRLGAMSAAPSQPNSQIRQNIRRSLKEILWKRVNDSDDLIMTENEVGKIALHIEKEMFNLFQVTDNRYKSKYRSIMFNLKDPKNQGLFHRVLREEISLAKLVRLKPEELVSKELSTWKERPARSVMESRTKLHNESKKTAPRQEAIPDLEDSPPVSDSEEQQESARAVPEKSTAPLLDVFSSMLKDTTSQHRAHLFDLNCKICTGQVPSAEDEPAPKKQKLSASVKKEDLKSKHDSSAPDPAPDSADEVMPEAVPEVASEPGLESASHPNVDRTYFPGPPGDGHPEPSPLEDLSPCPASCGSGVVTTVTVSGRDPRTAPSSSCTAVASAASRPDSTHMVEARQDVPKPVLTSVMVPKSILAKPSSSPDPRYLSVPPSPNISTSESRSPPEGDTTLFLSRLSTIWKGFINMQSVAKFVTKAYPVSGCFDYLSEDLPDTIHIGGRIAPKTVWDYVGKLKSSVSKELCLIRFHPATEEEEVAYISLYSYFSSRGRFGVVANNNRHVKDLYLIPLSAQDPVPSKLLPFEGPGLESPRPNIILGLVICQKIKRPANSGELDKMDEKRTRLQPEEADVPAYPKVATVPQSEKKPSKYPLCSADAAVSTTPPGSPPPPPPLPEPPVLKVLSSLKPAAPSPATAATTAAAASTAASSTASSASKTASPLEHILQTLFGKKKSFDPSAREPPGSTAGLPQEPKTTAEDGVPAPPLLDPIVQQFGQFSKDKALEEEEDDRPYDPEEEYDPERAFDTQLVERGRRHEVERAPEAAAAEREEVAYDPEDETILEEAKVTVDDLPNRMCADVRRNSVERPAEPVAGAATPSLVEQQKMLEELNKQIEEQKRQLEEQEEALRQQRAAVGVSMAHFSVSDALMSPPPKSSLPKAELFQQEQQSADKPASLPPASQASNHRDPRQARRLATETGEGEGEPLSRLSARGAQGALPERDASRGGLVGQAPMPVPEEKEPASSPWASGEKPPAGSEQDGWKAEPGEGTRPATVGDSSARPARRVLLPTPPCGALQPGFPLQHDGERDPFTCPGFASQDKALGSAQYEDPRNLHSAGRSSSPAGETEGDREPQARPGEGTAPLPPPGQKVGGSQPPFQGQREPGPHALGMSGLHGPNFPGPRGPAPPFPEENIASNDGPRGPPPARFGAQKGPIPSLFSGQHGPPPYGDSRGPSPSYLGGPRGVAPSQFEERKDPHGEKREFQDAPYNEVTGAPAQFEGTEQAPFLGSRGGAPFQFGGQRRPLLSQLKGPRGGPPPSQFGGQRGPPPGHFVGPRGPHPSQFETARGPHPNQFEGPRGQAPNFMPGPRGIQPQQFEDQRVHSPPRFTNQRAPAPLQFGGLRGSAPFSEKNEQTPSRFHFQGQAPQVMKPGPRPLLELPSHPPQHRKDRWEEAGPPSALSSSAPGQGPEADGQWASADFREGKGHEYRNQTFEGRQRERFDVGPKEKPLEEPDAQGRASEDRRRERERGRNWSRERDWDRPREWDRHRDKDSSRDWDRNRERSANRDREREADRGKEWDRSRERSRNRERERDRRRDRDRSRSRERDRDKARDRERGRDRKDRSKSKESARDPKPEASRASDAGTASQA</sequence>
<feature type="chain" id="PRO_0000059324" description="Death-inducer obliterator 1">
    <location>
        <begin position="1"/>
        <end position="2240"/>
    </location>
</feature>
<feature type="domain" description="TFIIS central" evidence="5">
    <location>
        <begin position="670"/>
        <end position="790"/>
    </location>
</feature>
<feature type="zinc finger region" description="PHD-type" evidence="4">
    <location>
        <begin position="268"/>
        <end position="322"/>
    </location>
</feature>
<feature type="region of interest" description="Disordered" evidence="6">
    <location>
        <begin position="1"/>
        <end position="259"/>
    </location>
</feature>
<feature type="region of interest" description="Disordered" evidence="6">
    <location>
        <begin position="431"/>
        <end position="456"/>
    </location>
</feature>
<feature type="region of interest" description="Disordered" evidence="6">
    <location>
        <begin position="501"/>
        <end position="567"/>
    </location>
</feature>
<feature type="region of interest" description="Disordered" evidence="6">
    <location>
        <begin position="584"/>
        <end position="618"/>
    </location>
</feature>
<feature type="region of interest" description="Disordered" evidence="6">
    <location>
        <begin position="773"/>
        <end position="826"/>
    </location>
</feature>
<feature type="region of interest" description="Disordered" evidence="6">
    <location>
        <begin position="860"/>
        <end position="947"/>
    </location>
</feature>
<feature type="region of interest" description="Disordered" evidence="6">
    <location>
        <begin position="1013"/>
        <end position="1045"/>
    </location>
</feature>
<feature type="region of interest" description="Disordered" evidence="6">
    <location>
        <begin position="1206"/>
        <end position="1427"/>
    </location>
</feature>
<feature type="region of interest" description="Disordered" evidence="6">
    <location>
        <begin position="1453"/>
        <end position="1472"/>
    </location>
</feature>
<feature type="region of interest" description="Disordered" evidence="6">
    <location>
        <begin position="1517"/>
        <end position="2240"/>
    </location>
</feature>
<feature type="short sequence motif" description="Nuclear localization signal" evidence="3">
    <location>
        <begin position="165"/>
        <end position="173"/>
    </location>
</feature>
<feature type="short sequence motif" description="Nuclear localization signal" evidence="3">
    <location>
        <begin position="185"/>
        <end position="193"/>
    </location>
</feature>
<feature type="compositionally biased region" description="Basic and acidic residues" evidence="6">
    <location>
        <begin position="1"/>
        <end position="25"/>
    </location>
</feature>
<feature type="compositionally biased region" description="Polar residues" evidence="6">
    <location>
        <begin position="111"/>
        <end position="130"/>
    </location>
</feature>
<feature type="compositionally biased region" description="Basic and acidic residues" evidence="6">
    <location>
        <begin position="132"/>
        <end position="146"/>
    </location>
</feature>
<feature type="compositionally biased region" description="Acidic residues" evidence="6">
    <location>
        <begin position="147"/>
        <end position="156"/>
    </location>
</feature>
<feature type="compositionally biased region" description="Basic and acidic residues" evidence="6">
    <location>
        <begin position="172"/>
        <end position="181"/>
    </location>
</feature>
<feature type="compositionally biased region" description="Basic and acidic residues" evidence="6">
    <location>
        <begin position="230"/>
        <end position="246"/>
    </location>
</feature>
<feature type="compositionally biased region" description="Basic and acidic residues" evidence="6">
    <location>
        <begin position="433"/>
        <end position="451"/>
    </location>
</feature>
<feature type="compositionally biased region" description="Polar residues" evidence="6">
    <location>
        <begin position="501"/>
        <end position="510"/>
    </location>
</feature>
<feature type="compositionally biased region" description="Basic and acidic residues" evidence="6">
    <location>
        <begin position="530"/>
        <end position="541"/>
    </location>
</feature>
<feature type="compositionally biased region" description="Low complexity" evidence="6">
    <location>
        <begin position="542"/>
        <end position="551"/>
    </location>
</feature>
<feature type="compositionally biased region" description="Low complexity" evidence="6">
    <location>
        <begin position="604"/>
        <end position="618"/>
    </location>
</feature>
<feature type="compositionally biased region" description="Basic and acidic residues" evidence="6">
    <location>
        <begin position="773"/>
        <end position="791"/>
    </location>
</feature>
<feature type="compositionally biased region" description="Acidic residues" evidence="6">
    <location>
        <begin position="800"/>
        <end position="815"/>
    </location>
</feature>
<feature type="compositionally biased region" description="Basic and acidic residues" evidence="6">
    <location>
        <begin position="878"/>
        <end position="890"/>
    </location>
</feature>
<feature type="compositionally biased region" description="Pro residues" evidence="6">
    <location>
        <begin position="930"/>
        <end position="941"/>
    </location>
</feature>
<feature type="compositionally biased region" description="Basic and acidic residues" evidence="6">
    <location>
        <begin position="1207"/>
        <end position="1220"/>
    </location>
</feature>
<feature type="compositionally biased region" description="Pro residues" evidence="6">
    <location>
        <begin position="1258"/>
        <end position="1271"/>
    </location>
</feature>
<feature type="compositionally biased region" description="Low complexity" evidence="6">
    <location>
        <begin position="1276"/>
        <end position="1313"/>
    </location>
</feature>
<feature type="compositionally biased region" description="Acidic residues" evidence="6">
    <location>
        <begin position="1376"/>
        <end position="1392"/>
    </location>
</feature>
<feature type="compositionally biased region" description="Basic and acidic residues" evidence="6">
    <location>
        <begin position="1393"/>
        <end position="1424"/>
    </location>
</feature>
<feature type="compositionally biased region" description="Pro residues" evidence="6">
    <location>
        <begin position="1771"/>
        <end position="1782"/>
    </location>
</feature>
<feature type="compositionally biased region" description="Basic and acidic residues" evidence="6">
    <location>
        <begin position="1842"/>
        <end position="1856"/>
    </location>
</feature>
<feature type="compositionally biased region" description="Low complexity" evidence="6">
    <location>
        <begin position="2044"/>
        <end position="2059"/>
    </location>
</feature>
<feature type="compositionally biased region" description="Basic and acidic residues" evidence="6">
    <location>
        <begin position="2069"/>
        <end position="2101"/>
    </location>
</feature>
<feature type="compositionally biased region" description="Basic and acidic residues" evidence="6">
    <location>
        <begin position="2109"/>
        <end position="2230"/>
    </location>
</feature>
<feature type="modified residue" description="N-acetylmethionine" evidence="9 19">
    <location>
        <position position="1"/>
    </location>
</feature>
<feature type="modified residue" description="Phosphoserine" evidence="23">
    <location>
        <position position="60"/>
    </location>
</feature>
<feature type="modified residue" description="Phosphoserine" evidence="2">
    <location>
        <position position="114"/>
    </location>
</feature>
<feature type="modified residue" description="Phosphothreonine" evidence="18 21">
    <location>
        <position position="151"/>
    </location>
</feature>
<feature type="modified residue" description="Phosphoserine" evidence="18 21 22">
    <location>
        <position position="152"/>
    </location>
</feature>
<feature type="modified residue" description="Phosphoserine" evidence="18 21 22">
    <location>
        <position position="154"/>
    </location>
</feature>
<feature type="modified residue" description="Phosphoserine" evidence="23">
    <location>
        <position position="523"/>
    </location>
</feature>
<feature type="modified residue" description="Phosphoserine" evidence="15 18 20 21 22 23">
    <location>
        <position position="805"/>
    </location>
</feature>
<feature type="modified residue" description="Phosphoserine" evidence="15 18 20 21 23">
    <location>
        <position position="809"/>
    </location>
</feature>
<feature type="modified residue" description="Phosphoserine" evidence="2">
    <location>
        <position position="889"/>
    </location>
</feature>
<feature type="modified residue" description="Phosphoserine" evidence="16 18 22 23">
    <location>
        <position position="898"/>
    </location>
</feature>
<feature type="modified residue" description="Phosphoserine" evidence="18 23">
    <location>
        <position position="1019"/>
    </location>
</feature>
<feature type="modified residue" description="Phosphoserine" evidence="18 21">
    <location>
        <position position="1030"/>
    </location>
</feature>
<feature type="modified residue" description="Phosphoserine" evidence="17 21 22 23">
    <location>
        <position position="1040"/>
    </location>
</feature>
<feature type="modified residue" description="Phosphotyrosine" evidence="25">
    <location>
        <position position="1244"/>
    </location>
</feature>
<feature type="modified residue" description="Phosphothreonine" evidence="2">
    <location>
        <position position="1256"/>
    </location>
</feature>
<feature type="modified residue" description="Phosphoserine" evidence="18 22">
    <location>
        <position position="1260"/>
    </location>
</feature>
<feature type="modified residue" description="Phosphoserine" evidence="21">
    <location>
        <position position="1312"/>
    </location>
</feature>
<feature type="modified residue" description="Phosphoserine" evidence="16 17 18 21 22 23 25">
    <location>
        <position position="1456"/>
    </location>
</feature>
<feature type="modified residue" description="Phosphothreonine" evidence="18 23">
    <location>
        <position position="1469"/>
    </location>
</feature>
<feature type="modified residue" description="Phosphoserine" evidence="21">
    <location>
        <position position="1522"/>
    </location>
</feature>
<feature type="modified residue" description="Phosphoserine" evidence="18">
    <location>
        <position position="1714"/>
    </location>
</feature>
<feature type="modified residue" description="Omega-N-methylarginine" evidence="24">
    <location>
        <position position="1835"/>
    </location>
</feature>
<feature type="modified residue" description="Asymmetric dimethylarginine" evidence="24">
    <location>
        <position position="1893"/>
    </location>
</feature>
<feature type="modified residue" description="Asymmetric dimethylarginine" evidence="24">
    <location>
        <position position="1894"/>
    </location>
</feature>
<feature type="modified residue" description="Asymmetric dimethylarginine" evidence="24">
    <location>
        <position position="1977"/>
    </location>
</feature>
<feature type="modified residue" description="Asymmetric dimethylarginine" evidence="24">
    <location>
        <position position="1982"/>
    </location>
</feature>
<feature type="modified residue" description="Asymmetric dimethylarginine" evidence="24">
    <location>
        <position position="1993"/>
    </location>
</feature>
<feature type="modified residue" description="Asymmetric dimethylarginine" evidence="24">
    <location>
        <position position="2008"/>
    </location>
</feature>
<feature type="modified residue" description="Asymmetric dimethylarginine" evidence="24">
    <location>
        <position position="2024"/>
    </location>
</feature>
<feature type="cross-link" description="Glycyl lysine isopeptide (Lys-Gly) (interchain with G-Cter in SUMO2)" evidence="26">
    <location>
        <position position="247"/>
    </location>
</feature>
<feature type="cross-link" description="Glycyl lysine isopeptide (Lys-Gly) (interchain with G-Cter in SUMO2)" evidence="26">
    <location>
        <position position="879"/>
    </location>
</feature>
<feature type="splice variant" id="VSP_007211" description="In isoform 3." evidence="10 11">
    <original>STKEDRRSEEKAAAMAASKKTAPPGSAVGKQPA</original>
    <variation>CMYHLGVGLLDPSRSFWIAIPWACPGLGVAALC</variation>
    <location>
        <begin position="530"/>
        <end position="562"/>
    </location>
</feature>
<feature type="splice variant" id="VSP_007209" description="In isoform 2." evidence="11">
    <original>STKEDRRSEEKAAAM</original>
    <variation>CSGKYSYSLHPSLIA</variation>
    <location>
        <begin position="530"/>
        <end position="544"/>
    </location>
</feature>
<feature type="splice variant" id="VSP_007210" description="In isoform 2." evidence="11">
    <location>
        <begin position="545"/>
        <end position="2240"/>
    </location>
</feature>
<feature type="splice variant" id="VSP_007212" description="In isoform 3." evidence="10 11">
    <location>
        <begin position="563"/>
        <end position="2240"/>
    </location>
</feature>
<feature type="splice variant" id="VSP_017225" description="In isoform 1." evidence="11 12 13">
    <original>LESPRPNI</original>
    <variation>KRRLSGWR</variation>
    <location>
        <begin position="1182"/>
        <end position="1189"/>
    </location>
</feature>
<feature type="splice variant" id="VSP_017226" description="In isoform 1." evidence="11 12 13">
    <location>
        <begin position="1190"/>
        <end position="2240"/>
    </location>
</feature>
<feature type="sequence variant" id="VAR_028310" description="In dbSNP:rs6090161.">
    <original>P</original>
    <variation>L</variation>
    <location>
        <position position="13"/>
    </location>
</feature>
<feature type="sequence variant" id="VAR_028311" description="In dbSNP:rs6090160.">
    <original>P</original>
    <variation>L</variation>
    <location>
        <position position="276"/>
    </location>
</feature>
<feature type="sequence variant" id="VAR_057093" description="In dbSNP:rs1883848." evidence="7">
    <original>M</original>
    <variation>T</variation>
    <location>
        <position position="544"/>
    </location>
</feature>
<feature type="sequence variant" id="VAR_057094" description="In dbSNP:rs1883847." evidence="7">
    <original>A</original>
    <variation>T</variation>
    <location>
        <position position="556"/>
    </location>
</feature>
<feature type="sequence variant" id="VAR_057095" description="In dbSNP:rs750077.">
    <original>A</original>
    <variation>G</variation>
    <location>
        <position position="793"/>
    </location>
</feature>
<feature type="sequence variant" id="VAR_057096" description="In dbSNP:rs6011441.">
    <original>P</original>
    <variation>Q</variation>
    <location>
        <position position="1220"/>
    </location>
</feature>
<feature type="sequence variant" id="VAR_061740" description="In dbSNP:rs41282984.">
    <original>S</original>
    <variation>C</variation>
    <location>
        <position position="1708"/>
    </location>
</feature>
<feature type="mutagenesis site" description="Abolishes binding to H3K4me3." evidence="8">
    <original>W</original>
    <variation>T</variation>
    <location>
        <position position="291"/>
    </location>
</feature>
<feature type="sequence conflict" description="In Ref. 4; BAA92094." evidence="14" ref="4">
    <original>G</original>
    <variation>E</variation>
    <location>
        <position position="252"/>
    </location>
</feature>
<feature type="turn" evidence="28">
    <location>
        <begin position="271"/>
        <end position="274"/>
    </location>
</feature>
<feature type="strand" evidence="27">
    <location>
        <begin position="277"/>
        <end position="280"/>
    </location>
</feature>
<feature type="strand" evidence="28">
    <location>
        <begin position="282"/>
        <end position="284"/>
    </location>
</feature>
<feature type="turn" evidence="28">
    <location>
        <begin position="286"/>
        <end position="288"/>
    </location>
</feature>
<feature type="strand" evidence="28">
    <location>
        <begin position="291"/>
        <end position="293"/>
    </location>
</feature>
<feature type="helix" evidence="28">
    <location>
        <begin position="294"/>
        <end position="297"/>
    </location>
</feature>
<feature type="helix" evidence="28">
    <location>
        <begin position="301"/>
        <end position="310"/>
    </location>
</feature>
<feature type="turn" evidence="28">
    <location>
        <begin position="317"/>
        <end position="319"/>
    </location>
</feature>
<feature type="sequence conflict" description="In Ref. 7; AAH00770." evidence="14" ref="7">
    <original>S</original>
    <variation>L</variation>
    <location sequence="Q9BTC0-2">
        <position position="535"/>
    </location>
</feature>
<keyword id="KW-0002">3D-structure</keyword>
<keyword id="KW-0007">Acetylation</keyword>
<keyword id="KW-0025">Alternative splicing</keyword>
<keyword id="KW-0053">Apoptosis</keyword>
<keyword id="KW-0963">Cytoplasm</keyword>
<keyword id="KW-0206">Cytoskeleton</keyword>
<keyword id="KW-0903">Direct protein sequencing</keyword>
<keyword id="KW-1017">Isopeptide bond</keyword>
<keyword id="KW-0479">Metal-binding</keyword>
<keyword id="KW-0488">Methylation</keyword>
<keyword id="KW-0539">Nucleus</keyword>
<keyword id="KW-0597">Phosphoprotein</keyword>
<keyword id="KW-1267">Proteomics identification</keyword>
<keyword id="KW-1185">Reference proteome</keyword>
<keyword id="KW-0832">Ubl conjugation</keyword>
<keyword id="KW-0862">Zinc</keyword>
<keyword id="KW-0863">Zinc-finger</keyword>
<comment type="function">
    <text evidence="1 7">Putative transcription factor, weakly pro-apoptotic when overexpressed (By similarity). Tumor suppressor. Required for early embryonic stem cell development.</text>
</comment>
<comment type="function">
    <molecule>Isoform 2</molecule>
    <text evidence="7">Displaces isoform 4 at the onset of differentiation, required for repression of stemness genes.</text>
</comment>
<comment type="subunit">
    <text evidence="8">Interacts specifically (via PHD-type zinc finger) with histone H3 that is trimethylated at 'Lys-4' (H3K4me3), histone phosphorylation at 'Thr-3' or 'Thr-6' disrupts this binding and promotes translocation of DIDO1 from chromatin to the mitotic spindle during mitosis.</text>
</comment>
<comment type="interaction">
    <interactant intactId="EBI-739985">
        <id>Q9BTC0</id>
    </interactant>
    <interactant intactId="EBI-396176">
        <id>P51610</id>
        <label>HCFC1</label>
    </interactant>
    <organismsDiffer>false</organismsDiffer>
    <experiments>3</experiments>
</comment>
<comment type="subcellular location">
    <subcellularLocation>
        <location evidence="1">Cytoplasm</location>
    </subcellularLocation>
    <subcellularLocation>
        <location evidence="5">Nucleus</location>
    </subcellularLocation>
    <subcellularLocation>
        <location evidence="8">Cytoplasm</location>
        <location evidence="8">Cytoskeleton</location>
        <location evidence="8">Spindle</location>
    </subcellularLocation>
    <text evidence="1">Translocates to the nucleus after pro-apoptotic stimuli (By similarity). Translocates to the mitotic spindle upon loss of interaction with H3K4me3 during early mitosis.</text>
</comment>
<comment type="alternative products">
    <event type="alternative splicing"/>
    <isoform>
        <id>Q9BTC0-4</id>
        <name>4</name>
        <name>DIDO3</name>
        <sequence type="displayed"/>
    </isoform>
    <isoform>
        <id>Q9BTC0-1</id>
        <name>1</name>
        <name>DIDO2</name>
        <sequence type="described" ref="VSP_017225 VSP_017226"/>
    </isoform>
    <isoform>
        <id>Q9BTC0-2</id>
        <name>2</name>
        <name>DIDO1</name>
        <sequence type="described" ref="VSP_007209 VSP_007210"/>
    </isoform>
    <isoform>
        <id>Q9BTC0-3</id>
        <name>3</name>
        <name>a</name>
        <sequence type="described" ref="VSP_007211 VSP_007212"/>
    </isoform>
</comment>
<comment type="tissue specificity">
    <text>Ubiquitous.</text>
</comment>
<comment type="domain">
    <text>The PHD-type zinc finger forms an aromatic cage around H3K4me3.</text>
</comment>
<comment type="miscellaneous">
    <text>Defects in DIDO1 may be a cause of myeloid neoplasms.</text>
</comment>
<comment type="sequence caution" evidence="14">
    <conflict type="erroneous initiation">
        <sequence resource="EMBL-CDS" id="BAA20791"/>
    </conflict>
</comment>
<accession>Q9BTC0</accession>
<accession>A8MY65</accession>
<accession>B9EH82</accession>
<accession>E1P5I1</accession>
<accession>O15043</accession>
<accession>Q3ZTL7</accession>
<accession>Q3ZTL8</accession>
<accession>Q4VXS1</accession>
<accession>Q4VXS2</accession>
<accession>Q4VXV8</accession>
<accession>Q4VXV9</accession>
<accession>Q96D72</accession>
<accession>Q9BQW0</accession>
<accession>Q9BW03</accession>
<accession>Q9H4G6</accession>
<accession>Q9H4G7</accession>
<accession>Q9NTU8</accession>
<accession>Q9NUM8</accession>
<accession>Q9UFB6</accession>
<evidence type="ECO:0000250" key="1"/>
<evidence type="ECO:0000250" key="2">
    <source>
        <dbReference type="UniProtKB" id="Q8C9B9"/>
    </source>
</evidence>
<evidence type="ECO:0000255" key="3"/>
<evidence type="ECO:0000255" key="4">
    <source>
        <dbReference type="PROSITE-ProRule" id="PRU00146"/>
    </source>
</evidence>
<evidence type="ECO:0000255" key="5">
    <source>
        <dbReference type="PROSITE-ProRule" id="PRU00651"/>
    </source>
</evidence>
<evidence type="ECO:0000256" key="6">
    <source>
        <dbReference type="SAM" id="MobiDB-lite"/>
    </source>
</evidence>
<evidence type="ECO:0000269" key="7">
    <source>
    </source>
</evidence>
<evidence type="ECO:0000269" key="8">
    <source>
    </source>
</evidence>
<evidence type="ECO:0000269" key="9">
    <source ref="8"/>
</evidence>
<evidence type="ECO:0000303" key="10">
    <source>
    </source>
</evidence>
<evidence type="ECO:0000303" key="11">
    <source>
    </source>
</evidence>
<evidence type="ECO:0000303" key="12">
    <source>
    </source>
</evidence>
<evidence type="ECO:0000303" key="13">
    <source>
    </source>
</evidence>
<evidence type="ECO:0000305" key="14"/>
<evidence type="ECO:0007744" key="15">
    <source>
    </source>
</evidence>
<evidence type="ECO:0007744" key="16">
    <source>
    </source>
</evidence>
<evidence type="ECO:0007744" key="17">
    <source>
    </source>
</evidence>
<evidence type="ECO:0007744" key="18">
    <source>
    </source>
</evidence>
<evidence type="ECO:0007744" key="19">
    <source>
    </source>
</evidence>
<evidence type="ECO:0007744" key="20">
    <source>
    </source>
</evidence>
<evidence type="ECO:0007744" key="21">
    <source>
    </source>
</evidence>
<evidence type="ECO:0007744" key="22">
    <source>
    </source>
</evidence>
<evidence type="ECO:0007744" key="23">
    <source>
    </source>
</evidence>
<evidence type="ECO:0007744" key="24">
    <source>
    </source>
</evidence>
<evidence type="ECO:0007744" key="25">
    <source>
    </source>
</evidence>
<evidence type="ECO:0007744" key="26">
    <source>
    </source>
</evidence>
<evidence type="ECO:0007829" key="27">
    <source>
        <dbReference type="PDB" id="2M3H"/>
    </source>
</evidence>
<evidence type="ECO:0007829" key="28">
    <source>
        <dbReference type="PDB" id="4L7X"/>
    </source>
</evidence>
<proteinExistence type="evidence at protein level"/>
<protein>
    <recommendedName>
        <fullName>Death-inducer obliterator 1</fullName>
        <shortName>DIO-1</shortName>
        <shortName>hDido1</shortName>
    </recommendedName>
    <alternativeName>
        <fullName>Death-associated transcription factor 1</fullName>
        <shortName>DATF-1</shortName>
    </alternativeName>
</protein>
<name>DIDO1_HUMAN</name>
<reference key="1">
    <citation type="journal article" date="2005" name="J. Clin. Invest.">
        <title>Dido gene expression alterations are implicated in the induction of hematological myeloid neoplasms.</title>
        <authorList>
            <person name="Futterer A."/>
            <person name="Campanero M.R."/>
            <person name="Leonardo E."/>
            <person name="Criado L.M."/>
            <person name="Flores J.M."/>
            <person name="Hernandez J.M."/>
            <person name="San Miguel J.F."/>
            <person name="Martinez-A C."/>
        </authorList>
    </citation>
    <scope>NUCLEOTIDE SEQUENCE [MRNA] (ISOFORMS 1 AND 4)</scope>
    <scope>FUNCTION</scope>
    <scope>ROLE IN MYELOID NEOPLASMS</scope>
    <scope>VARIANTS THR-544 AND THR-556</scope>
</reference>
<reference key="2">
    <citation type="journal article" date="1997" name="DNA Res.">
        <title>Prediction of the coding sequences of unidentified human genes. VII. The complete sequences of 100 new cDNA clones from brain which can code for large proteins in vitro.</title>
        <authorList>
            <person name="Nagase T."/>
            <person name="Ishikawa K."/>
            <person name="Nakajima D."/>
            <person name="Ohira M."/>
            <person name="Seki N."/>
            <person name="Miyajima N."/>
            <person name="Tanaka A."/>
            <person name="Kotani H."/>
            <person name="Nomura N."/>
            <person name="Ohara O."/>
        </authorList>
    </citation>
    <scope>NUCLEOTIDE SEQUENCE [LARGE SCALE MRNA] (ISOFORM 1)</scope>
    <source>
        <tissue>Brain</tissue>
    </source>
</reference>
<reference key="3">
    <citation type="submission" date="2005-01" db="EMBL/GenBank/DDBJ databases">
        <authorList>
            <person name="Ohara O."/>
            <person name="Nagase T."/>
            <person name="Kikuno R."/>
            <person name="Nomura N."/>
        </authorList>
    </citation>
    <scope>SEQUENCE REVISION</scope>
</reference>
<reference key="4">
    <citation type="journal article" date="2004" name="Nat. Genet.">
        <title>Complete sequencing and characterization of 21,243 full-length human cDNAs.</title>
        <authorList>
            <person name="Ota T."/>
            <person name="Suzuki Y."/>
            <person name="Nishikawa T."/>
            <person name="Otsuki T."/>
            <person name="Sugiyama T."/>
            <person name="Irie R."/>
            <person name="Wakamatsu A."/>
            <person name="Hayashi K."/>
            <person name="Sato H."/>
            <person name="Nagai K."/>
            <person name="Kimura K."/>
            <person name="Makita H."/>
            <person name="Sekine M."/>
            <person name="Obayashi M."/>
            <person name="Nishi T."/>
            <person name="Shibahara T."/>
            <person name="Tanaka T."/>
            <person name="Ishii S."/>
            <person name="Yamamoto J."/>
            <person name="Saito K."/>
            <person name="Kawai Y."/>
            <person name="Isono Y."/>
            <person name="Nakamura Y."/>
            <person name="Nagahari K."/>
            <person name="Murakami K."/>
            <person name="Yasuda T."/>
            <person name="Iwayanagi T."/>
            <person name="Wagatsuma M."/>
            <person name="Shiratori A."/>
            <person name="Sudo H."/>
            <person name="Hosoiri T."/>
            <person name="Kaku Y."/>
            <person name="Kodaira H."/>
            <person name="Kondo H."/>
            <person name="Sugawara M."/>
            <person name="Takahashi M."/>
            <person name="Kanda K."/>
            <person name="Yokoi T."/>
            <person name="Furuya T."/>
            <person name="Kikkawa E."/>
            <person name="Omura Y."/>
            <person name="Abe K."/>
            <person name="Kamihara K."/>
            <person name="Katsuta N."/>
            <person name="Sato K."/>
            <person name="Tanikawa M."/>
            <person name="Yamazaki M."/>
            <person name="Ninomiya K."/>
            <person name="Ishibashi T."/>
            <person name="Yamashita H."/>
            <person name="Murakawa K."/>
            <person name="Fujimori K."/>
            <person name="Tanai H."/>
            <person name="Kimata M."/>
            <person name="Watanabe M."/>
            <person name="Hiraoka S."/>
            <person name="Chiba Y."/>
            <person name="Ishida S."/>
            <person name="Ono Y."/>
            <person name="Takiguchi S."/>
            <person name="Watanabe S."/>
            <person name="Yosida M."/>
            <person name="Hotuta T."/>
            <person name="Kusano J."/>
            <person name="Kanehori K."/>
            <person name="Takahashi-Fujii A."/>
            <person name="Hara H."/>
            <person name="Tanase T.-O."/>
            <person name="Nomura Y."/>
            <person name="Togiya S."/>
            <person name="Komai F."/>
            <person name="Hara R."/>
            <person name="Takeuchi K."/>
            <person name="Arita M."/>
            <person name="Imose N."/>
            <person name="Musashino K."/>
            <person name="Yuuki H."/>
            <person name="Oshima A."/>
            <person name="Sasaki N."/>
            <person name="Aotsuka S."/>
            <person name="Yoshikawa Y."/>
            <person name="Matsunawa H."/>
            <person name="Ichihara T."/>
            <person name="Shiohata N."/>
            <person name="Sano S."/>
            <person name="Moriya S."/>
            <person name="Momiyama H."/>
            <person name="Satoh N."/>
            <person name="Takami S."/>
            <person name="Terashima Y."/>
            <person name="Suzuki O."/>
            <person name="Nakagawa S."/>
            <person name="Senoh A."/>
            <person name="Mizoguchi H."/>
            <person name="Goto Y."/>
            <person name="Shimizu F."/>
            <person name="Wakebe H."/>
            <person name="Hishigaki H."/>
            <person name="Watanabe T."/>
            <person name="Sugiyama A."/>
            <person name="Takemoto M."/>
            <person name="Kawakami B."/>
            <person name="Yamazaki M."/>
            <person name="Watanabe K."/>
            <person name="Kumagai A."/>
            <person name="Itakura S."/>
            <person name="Fukuzumi Y."/>
            <person name="Fujimori Y."/>
            <person name="Komiyama M."/>
            <person name="Tashiro H."/>
            <person name="Tanigami A."/>
            <person name="Fujiwara T."/>
            <person name="Ono T."/>
            <person name="Yamada K."/>
            <person name="Fujii Y."/>
            <person name="Ozaki K."/>
            <person name="Hirao M."/>
            <person name="Ohmori Y."/>
            <person name="Kawabata A."/>
            <person name="Hikiji T."/>
            <person name="Kobatake N."/>
            <person name="Inagaki H."/>
            <person name="Ikema Y."/>
            <person name="Okamoto S."/>
            <person name="Okitani R."/>
            <person name="Kawakami T."/>
            <person name="Noguchi S."/>
            <person name="Itoh T."/>
            <person name="Shigeta K."/>
            <person name="Senba T."/>
            <person name="Matsumura K."/>
            <person name="Nakajima Y."/>
            <person name="Mizuno T."/>
            <person name="Morinaga M."/>
            <person name="Sasaki M."/>
            <person name="Togashi T."/>
            <person name="Oyama M."/>
            <person name="Hata H."/>
            <person name="Watanabe M."/>
            <person name="Komatsu T."/>
            <person name="Mizushima-Sugano J."/>
            <person name="Satoh T."/>
            <person name="Shirai Y."/>
            <person name="Takahashi Y."/>
            <person name="Nakagawa K."/>
            <person name="Okumura K."/>
            <person name="Nagase T."/>
            <person name="Nomura N."/>
            <person name="Kikuchi H."/>
            <person name="Masuho Y."/>
            <person name="Yamashita R."/>
            <person name="Nakai K."/>
            <person name="Yada T."/>
            <person name="Nakamura Y."/>
            <person name="Ohara O."/>
            <person name="Isogai T."/>
            <person name="Sugano S."/>
        </authorList>
    </citation>
    <scope>NUCLEOTIDE SEQUENCE [LARGE SCALE MRNA] (ISOFORM 3)</scope>
    <source>
        <tissue>Placenta</tissue>
    </source>
</reference>
<reference key="5">
    <citation type="journal article" date="2001" name="Nature">
        <title>The DNA sequence and comparative analysis of human chromosome 20.</title>
        <authorList>
            <person name="Deloukas P."/>
            <person name="Matthews L.H."/>
            <person name="Ashurst J.L."/>
            <person name="Burton J."/>
            <person name="Gilbert J.G.R."/>
            <person name="Jones M."/>
            <person name="Stavrides G."/>
            <person name="Almeida J.P."/>
            <person name="Babbage A.K."/>
            <person name="Bagguley C.L."/>
            <person name="Bailey J."/>
            <person name="Barlow K.F."/>
            <person name="Bates K.N."/>
            <person name="Beard L.M."/>
            <person name="Beare D.M."/>
            <person name="Beasley O.P."/>
            <person name="Bird C.P."/>
            <person name="Blakey S.E."/>
            <person name="Bridgeman A.M."/>
            <person name="Brown A.J."/>
            <person name="Buck D."/>
            <person name="Burrill W.D."/>
            <person name="Butler A.P."/>
            <person name="Carder C."/>
            <person name="Carter N.P."/>
            <person name="Chapman J.C."/>
            <person name="Clamp M."/>
            <person name="Clark G."/>
            <person name="Clark L.N."/>
            <person name="Clark S.Y."/>
            <person name="Clee C.M."/>
            <person name="Clegg S."/>
            <person name="Cobley V.E."/>
            <person name="Collier R.E."/>
            <person name="Connor R.E."/>
            <person name="Corby N.R."/>
            <person name="Coulson A."/>
            <person name="Coville G.J."/>
            <person name="Deadman R."/>
            <person name="Dhami P.D."/>
            <person name="Dunn M."/>
            <person name="Ellington A.G."/>
            <person name="Frankland J.A."/>
            <person name="Fraser A."/>
            <person name="French L."/>
            <person name="Garner P."/>
            <person name="Grafham D.V."/>
            <person name="Griffiths C."/>
            <person name="Griffiths M.N.D."/>
            <person name="Gwilliam R."/>
            <person name="Hall R.E."/>
            <person name="Hammond S."/>
            <person name="Harley J.L."/>
            <person name="Heath P.D."/>
            <person name="Ho S."/>
            <person name="Holden J.L."/>
            <person name="Howden P.J."/>
            <person name="Huckle E."/>
            <person name="Hunt A.R."/>
            <person name="Hunt S.E."/>
            <person name="Jekosch K."/>
            <person name="Johnson C.M."/>
            <person name="Johnson D."/>
            <person name="Kay M.P."/>
            <person name="Kimberley A.M."/>
            <person name="King A."/>
            <person name="Knights A."/>
            <person name="Laird G.K."/>
            <person name="Lawlor S."/>
            <person name="Lehvaeslaiho M.H."/>
            <person name="Leversha M.A."/>
            <person name="Lloyd C."/>
            <person name="Lloyd D.M."/>
            <person name="Lovell J.D."/>
            <person name="Marsh V.L."/>
            <person name="Martin S.L."/>
            <person name="McConnachie L.J."/>
            <person name="McLay K."/>
            <person name="McMurray A.A."/>
            <person name="Milne S.A."/>
            <person name="Mistry D."/>
            <person name="Moore M.J.F."/>
            <person name="Mullikin J.C."/>
            <person name="Nickerson T."/>
            <person name="Oliver K."/>
            <person name="Parker A."/>
            <person name="Patel R."/>
            <person name="Pearce T.A.V."/>
            <person name="Peck A.I."/>
            <person name="Phillimore B.J.C.T."/>
            <person name="Prathalingam S.R."/>
            <person name="Plumb R.W."/>
            <person name="Ramsay H."/>
            <person name="Rice C.M."/>
            <person name="Ross M.T."/>
            <person name="Scott C.E."/>
            <person name="Sehra H.K."/>
            <person name="Shownkeen R."/>
            <person name="Sims S."/>
            <person name="Skuce C.D."/>
            <person name="Smith M.L."/>
            <person name="Soderlund C."/>
            <person name="Steward C.A."/>
            <person name="Sulston J.E."/>
            <person name="Swann R.M."/>
            <person name="Sycamore N."/>
            <person name="Taylor R."/>
            <person name="Tee L."/>
            <person name="Thomas D.W."/>
            <person name="Thorpe A."/>
            <person name="Tracey A."/>
            <person name="Tromans A.C."/>
            <person name="Vaudin M."/>
            <person name="Wall M."/>
            <person name="Wallis J.M."/>
            <person name="Whitehead S.L."/>
            <person name="Whittaker P."/>
            <person name="Willey D.L."/>
            <person name="Williams L."/>
            <person name="Williams S.A."/>
            <person name="Wilming L."/>
            <person name="Wray P.W."/>
            <person name="Hubbard T."/>
            <person name="Durbin R.M."/>
            <person name="Bentley D.R."/>
            <person name="Beck S."/>
            <person name="Rogers J."/>
        </authorList>
    </citation>
    <scope>NUCLEOTIDE SEQUENCE [LARGE SCALE GENOMIC DNA]</scope>
</reference>
<reference key="6">
    <citation type="submission" date="2005-09" db="EMBL/GenBank/DDBJ databases">
        <authorList>
            <person name="Mural R.J."/>
            <person name="Istrail S."/>
            <person name="Sutton G.G."/>
            <person name="Florea L."/>
            <person name="Halpern A.L."/>
            <person name="Mobarry C.M."/>
            <person name="Lippert R."/>
            <person name="Walenz B."/>
            <person name="Shatkay H."/>
            <person name="Dew I."/>
            <person name="Miller J.R."/>
            <person name="Flanigan M.J."/>
            <person name="Edwards N.J."/>
            <person name="Bolanos R."/>
            <person name="Fasulo D."/>
            <person name="Halldorsson B.V."/>
            <person name="Hannenhalli S."/>
            <person name="Turner R."/>
            <person name="Yooseph S."/>
            <person name="Lu F."/>
            <person name="Nusskern D.R."/>
            <person name="Shue B.C."/>
            <person name="Zheng X.H."/>
            <person name="Zhong F."/>
            <person name="Delcher A.L."/>
            <person name="Huson D.H."/>
            <person name="Kravitz S.A."/>
            <person name="Mouchard L."/>
            <person name="Reinert K."/>
            <person name="Remington K.A."/>
            <person name="Clark A.G."/>
            <person name="Waterman M.S."/>
            <person name="Eichler E.E."/>
            <person name="Adams M.D."/>
            <person name="Hunkapiller M.W."/>
            <person name="Myers E.W."/>
            <person name="Venter J.C."/>
        </authorList>
    </citation>
    <scope>NUCLEOTIDE SEQUENCE [LARGE SCALE GENOMIC DNA]</scope>
</reference>
<reference key="7">
    <citation type="journal article" date="2004" name="Genome Res.">
        <title>The status, quality, and expansion of the NIH full-length cDNA project: the Mammalian Gene Collection (MGC).</title>
        <authorList>
            <consortium name="The MGC Project Team"/>
        </authorList>
    </citation>
    <scope>NUCLEOTIDE SEQUENCE [LARGE SCALE MRNA] (ISOFORMS 1; 3 AND 2)</scope>
    <source>
        <tissue>Brain</tissue>
        <tissue>Colon</tissue>
        <tissue>Kidney</tissue>
        <tissue>Muscle</tissue>
        <tissue>Placenta</tissue>
    </source>
</reference>
<reference key="8">
    <citation type="submission" date="2008-12" db="UniProtKB">
        <authorList>
            <person name="Bienvenut W.V."/>
            <person name="Lilla S."/>
            <person name="von Kriegsheim A."/>
            <person name="Lempens A."/>
            <person name="Kolch W."/>
        </authorList>
    </citation>
    <scope>PROTEIN SEQUENCE OF 1-14; 74-82; 519-529; 613-626; 1218-1230; 1334-1347; 1439-1447 AND 1743-1754</scope>
    <scope>ACETYLATION AT MET-1</scope>
    <scope>IDENTIFICATION BY MASS SPECTROMETRY</scope>
    <source>
        <tissue>Ovarian carcinoma</tissue>
    </source>
</reference>
<reference key="9">
    <citation type="journal article" date="2007" name="BMC Genomics">
        <title>The full-ORF clone resource of the German cDNA consortium.</title>
        <authorList>
            <person name="Bechtel S."/>
            <person name="Rosenfelder H."/>
            <person name="Duda A."/>
            <person name="Schmidt C.P."/>
            <person name="Ernst U."/>
            <person name="Wellenreuther R."/>
            <person name="Mehrle A."/>
            <person name="Schuster C."/>
            <person name="Bahr A."/>
            <person name="Bloecker H."/>
            <person name="Heubner D."/>
            <person name="Hoerlein A."/>
            <person name="Michel G."/>
            <person name="Wedler H."/>
            <person name="Koehrer K."/>
            <person name="Ottenwaelder B."/>
            <person name="Poustka A."/>
            <person name="Wiemann S."/>
            <person name="Schupp I."/>
        </authorList>
    </citation>
    <scope>NUCLEOTIDE SEQUENCE [LARGE SCALE MRNA] OF 1623-2240 (ISOFORM 4)</scope>
    <source>
        <tissue>Testis</tissue>
    </source>
</reference>
<reference key="10">
    <citation type="journal article" date="2006" name="Cell">
        <title>Global, in vivo, and site-specific phosphorylation dynamics in signaling networks.</title>
        <authorList>
            <person name="Olsen J.V."/>
            <person name="Blagoev B."/>
            <person name="Gnad F."/>
            <person name="Macek B."/>
            <person name="Kumar C."/>
            <person name="Mortensen P."/>
            <person name="Mann M."/>
        </authorList>
    </citation>
    <scope>PHOSPHORYLATION [LARGE SCALE ANALYSIS] AT SER-898 AND SER-1456</scope>
    <scope>IDENTIFICATION BY MASS SPECTROMETRY [LARGE SCALE ANALYSIS]</scope>
    <source>
        <tissue>Cervix carcinoma</tissue>
    </source>
</reference>
<reference key="11">
    <citation type="journal article" date="2006" name="Nat. Biotechnol.">
        <title>A probability-based approach for high-throughput protein phosphorylation analysis and site localization.</title>
        <authorList>
            <person name="Beausoleil S.A."/>
            <person name="Villen J."/>
            <person name="Gerber S.A."/>
            <person name="Rush J."/>
            <person name="Gygi S.P."/>
        </authorList>
    </citation>
    <scope>PHOSPHORYLATION [LARGE SCALE ANALYSIS] AT SER-805 AND SER-809</scope>
    <scope>IDENTIFICATION BY MASS SPECTROMETRY [LARGE SCALE ANALYSIS]</scope>
    <source>
        <tissue>Cervix carcinoma</tissue>
    </source>
</reference>
<reference key="12">
    <citation type="journal article" date="2008" name="J. Proteome Res.">
        <title>Combining protein-based IMAC, peptide-based IMAC, and MudPIT for efficient phosphoproteomic analysis.</title>
        <authorList>
            <person name="Cantin G.T."/>
            <person name="Yi W."/>
            <person name="Lu B."/>
            <person name="Park S.K."/>
            <person name="Xu T."/>
            <person name="Lee J.-D."/>
            <person name="Yates J.R. III"/>
        </authorList>
    </citation>
    <scope>PHOSPHORYLATION [LARGE SCALE ANALYSIS] AT SER-1040 AND SER-1456</scope>
    <scope>IDENTIFICATION BY MASS SPECTROMETRY [LARGE SCALE ANALYSIS]</scope>
    <source>
        <tissue>Cervix carcinoma</tissue>
    </source>
</reference>
<reference key="13">
    <citation type="journal article" date="2008" name="Proc. Natl. Acad. Sci. U.S.A.">
        <title>A quantitative atlas of mitotic phosphorylation.</title>
        <authorList>
            <person name="Dephoure N."/>
            <person name="Zhou C."/>
            <person name="Villen J."/>
            <person name="Beausoleil S.A."/>
            <person name="Bakalarski C.E."/>
            <person name="Elledge S.J."/>
            <person name="Gygi S.P."/>
        </authorList>
    </citation>
    <scope>PHOSPHORYLATION [LARGE SCALE ANALYSIS] AT THR-151; SER-152; SER-154; SER-805; SER-809; SER-898; SER-1019; SER-1030; SER-1260; SER-1456; THR-1469 AND SER-1714</scope>
    <scope>IDENTIFICATION BY MASS SPECTROMETRY [LARGE SCALE ANALYSIS]</scope>
    <source>
        <tissue>Cervix carcinoma</tissue>
    </source>
</reference>
<reference key="14">
    <citation type="journal article" date="2009" name="Anal. Chem.">
        <title>Lys-N and trypsin cover complementary parts of the phosphoproteome in a refined SCX-based approach.</title>
        <authorList>
            <person name="Gauci S."/>
            <person name="Helbig A.O."/>
            <person name="Slijper M."/>
            <person name="Krijgsveld J."/>
            <person name="Heck A.J."/>
            <person name="Mohammed S."/>
        </authorList>
    </citation>
    <scope>ACETYLATION [LARGE SCALE ANALYSIS] AT MET-1</scope>
    <scope>IDENTIFICATION BY MASS SPECTROMETRY [LARGE SCALE ANALYSIS]</scope>
</reference>
<reference key="15">
    <citation type="journal article" date="2009" name="Sci. Signal.">
        <title>Quantitative phosphoproteomic analysis of T cell receptor signaling reveals system-wide modulation of protein-protein interactions.</title>
        <authorList>
            <person name="Mayya V."/>
            <person name="Lundgren D.H."/>
            <person name="Hwang S.-I."/>
            <person name="Rezaul K."/>
            <person name="Wu L."/>
            <person name="Eng J.K."/>
            <person name="Rodionov V."/>
            <person name="Han D.K."/>
        </authorList>
    </citation>
    <scope>PHOSPHORYLATION [LARGE SCALE ANALYSIS] AT SER-805 AND SER-809</scope>
    <scope>IDENTIFICATION BY MASS SPECTROMETRY [LARGE SCALE ANALYSIS]</scope>
    <source>
        <tissue>Leukemic T-cell</tissue>
    </source>
</reference>
<reference key="16">
    <citation type="journal article" date="2010" name="Sci. Signal.">
        <title>Quantitative phosphoproteomics reveals widespread full phosphorylation site occupancy during mitosis.</title>
        <authorList>
            <person name="Olsen J.V."/>
            <person name="Vermeulen M."/>
            <person name="Santamaria A."/>
            <person name="Kumar C."/>
            <person name="Miller M.L."/>
            <person name="Jensen L.J."/>
            <person name="Gnad F."/>
            <person name="Cox J."/>
            <person name="Jensen T.S."/>
            <person name="Nigg E.A."/>
            <person name="Brunak S."/>
            <person name="Mann M."/>
        </authorList>
    </citation>
    <scope>PHOSPHORYLATION [LARGE SCALE ANALYSIS] AT THR-151; SER-152; SER-154; SER-805; SER-809; SER-1030; SER-1040; SER-1312; SER-1456 AND SER-1522</scope>
    <scope>IDENTIFICATION BY MASS SPECTROMETRY [LARGE SCALE ANALYSIS]</scope>
    <source>
        <tissue>Cervix carcinoma</tissue>
    </source>
</reference>
<reference key="17">
    <citation type="journal article" date="2011" name="BMC Syst. Biol.">
        <title>Initial characterization of the human central proteome.</title>
        <authorList>
            <person name="Burkard T.R."/>
            <person name="Planyavsky M."/>
            <person name="Kaupe I."/>
            <person name="Breitwieser F.P."/>
            <person name="Buerckstuemmer T."/>
            <person name="Bennett K.L."/>
            <person name="Superti-Furga G."/>
            <person name="Colinge J."/>
        </authorList>
    </citation>
    <scope>IDENTIFICATION BY MASS SPECTROMETRY [LARGE SCALE ANALYSIS]</scope>
</reference>
<reference key="18">
    <citation type="journal article" date="2011" name="Sci. Signal.">
        <title>System-wide temporal characterization of the proteome and phosphoproteome of human embryonic stem cell differentiation.</title>
        <authorList>
            <person name="Rigbolt K.T."/>
            <person name="Prokhorova T.A."/>
            <person name="Akimov V."/>
            <person name="Henningsen J."/>
            <person name="Johansen P.T."/>
            <person name="Kratchmarova I."/>
            <person name="Kassem M."/>
            <person name="Mann M."/>
            <person name="Olsen J.V."/>
            <person name="Blagoev B."/>
        </authorList>
    </citation>
    <scope>PHOSPHORYLATION [LARGE SCALE ANALYSIS] AT SER-152; SER-154; SER-805; SER-898; SER-1040; SER-1260 AND SER-1456</scope>
    <scope>IDENTIFICATION BY MASS SPECTROMETRY [LARGE SCALE ANALYSIS]</scope>
</reference>
<reference key="19">
    <citation type="journal article" date="2013" name="J. Proteome Res.">
        <title>Toward a comprehensive characterization of a human cancer cell phosphoproteome.</title>
        <authorList>
            <person name="Zhou H."/>
            <person name="Di Palma S."/>
            <person name="Preisinger C."/>
            <person name="Peng M."/>
            <person name="Polat A.N."/>
            <person name="Heck A.J."/>
            <person name="Mohammed S."/>
        </authorList>
    </citation>
    <scope>PHOSPHORYLATION [LARGE SCALE ANALYSIS] AT SER-60; SER-523; SER-805; SER-809; SER-898; SER-1019; SER-1040; SER-1456 AND THR-1469</scope>
    <scope>IDENTIFICATION BY MASS SPECTROMETRY [LARGE SCALE ANALYSIS]</scope>
    <source>
        <tissue>Cervix carcinoma</tissue>
        <tissue>Erythroleukemia</tissue>
    </source>
</reference>
<reference key="20">
    <citation type="journal article" date="2014" name="J. Proteomics">
        <title>An enzyme assisted RP-RPLC approach for in-depth analysis of human liver phosphoproteome.</title>
        <authorList>
            <person name="Bian Y."/>
            <person name="Song C."/>
            <person name="Cheng K."/>
            <person name="Dong M."/>
            <person name="Wang F."/>
            <person name="Huang J."/>
            <person name="Sun D."/>
            <person name="Wang L."/>
            <person name="Ye M."/>
            <person name="Zou H."/>
        </authorList>
    </citation>
    <scope>PHOSPHORYLATION [LARGE SCALE ANALYSIS] AT TYR-1244 AND SER-1456</scope>
    <scope>IDENTIFICATION BY MASS SPECTROMETRY [LARGE SCALE ANALYSIS]</scope>
    <source>
        <tissue>Liver</tissue>
    </source>
</reference>
<reference key="21">
    <citation type="journal article" date="2014" name="Mol. Cell. Proteomics">
        <title>Immunoaffinity enrichment and mass spectrometry analysis of protein methylation.</title>
        <authorList>
            <person name="Guo A."/>
            <person name="Gu H."/>
            <person name="Zhou J."/>
            <person name="Mulhern D."/>
            <person name="Wang Y."/>
            <person name="Lee K.A."/>
            <person name="Yang V."/>
            <person name="Aguiar M."/>
            <person name="Kornhauser J."/>
            <person name="Jia X."/>
            <person name="Ren J."/>
            <person name="Beausoleil S.A."/>
            <person name="Silva J.C."/>
            <person name="Vemulapalli V."/>
            <person name="Bedford M.T."/>
            <person name="Comb M.J."/>
        </authorList>
    </citation>
    <scope>METHYLATION [LARGE SCALE ANALYSIS] AT ARG-1835; ARG-1893; ARG-1894; ARG-1977; ARG-1982; ARG-1993; ARG-2008 AND ARG-2024</scope>
    <scope>IDENTIFICATION BY MASS SPECTROMETRY [LARGE SCALE ANALYSIS]</scope>
    <source>
        <tissue>Colon carcinoma</tissue>
    </source>
</reference>
<reference key="22">
    <citation type="journal article" date="2017" name="Nat. Struct. Mol. Biol.">
        <title>Site-specific mapping of the human SUMO proteome reveals co-modification with phosphorylation.</title>
        <authorList>
            <person name="Hendriks I.A."/>
            <person name="Lyon D."/>
            <person name="Young C."/>
            <person name="Jensen L.J."/>
            <person name="Vertegaal A.C."/>
            <person name="Nielsen M.L."/>
        </authorList>
    </citation>
    <scope>SUMOYLATION [LARGE SCALE ANALYSIS] AT LYS-247 AND LYS-879</scope>
    <scope>IDENTIFICATION BY MASS SPECTROMETRY [LARGE SCALE ANALYSIS]</scope>
</reference>
<reference key="23">
    <citation type="journal article" date="2013" name="Cell Rep.">
        <title>Dido3 PHD modulates cell differentiation and division.</title>
        <authorList>
            <person name="Gatchalian J."/>
            <person name="Futterer A."/>
            <person name="Rothbart S.B."/>
            <person name="Tong Q."/>
            <person name="Rincon-Arano H."/>
            <person name="Sanchez de Diego A."/>
            <person name="Groudine M."/>
            <person name="Strahl B.D."/>
            <person name="Martinez-A C."/>
            <person name="van Wely K.H."/>
            <person name="Kutateladze T.G."/>
        </authorList>
    </citation>
    <scope>X-RAY CRYSTALLOGRAPHY (1.35 ANGSTROMS) OF 266-325 IN COMPLEX WITH METHYLATED HISTONE H3 PEPTIDE</scope>
    <scope>FUNCTION (ISOFORMS 2 AND 4)</scope>
    <scope>SUBUNIT</scope>
    <scope>SUBCELLULAR LOCATION</scope>
    <scope>MUTAGENESIS OF TRP-291</scope>
</reference>
<gene>
    <name type="primary">DIDO1</name>
    <name type="synonym">C20orf158</name>
    <name type="synonym">DATF1</name>
    <name type="synonym">KIAA0333</name>
</gene>
<organism>
    <name type="scientific">Homo sapiens</name>
    <name type="common">Human</name>
    <dbReference type="NCBI Taxonomy" id="9606"/>
    <lineage>
        <taxon>Eukaryota</taxon>
        <taxon>Metazoa</taxon>
        <taxon>Chordata</taxon>
        <taxon>Craniata</taxon>
        <taxon>Vertebrata</taxon>
        <taxon>Euteleostomi</taxon>
        <taxon>Mammalia</taxon>
        <taxon>Eutheria</taxon>
        <taxon>Euarchontoglires</taxon>
        <taxon>Primates</taxon>
        <taxon>Haplorrhini</taxon>
        <taxon>Catarrhini</taxon>
        <taxon>Hominidae</taxon>
        <taxon>Homo</taxon>
    </lineage>
</organism>